<gene>
    <name evidence="1" type="primary">pyrG</name>
    <name type="ordered locus">trd_1236</name>
</gene>
<accession>B9L1H7</accession>
<reference key="1">
    <citation type="journal article" date="2009" name="PLoS ONE">
        <title>Complete genome sequence of the aerobic CO-oxidizing thermophile Thermomicrobium roseum.</title>
        <authorList>
            <person name="Wu D."/>
            <person name="Raymond J."/>
            <person name="Wu M."/>
            <person name="Chatterji S."/>
            <person name="Ren Q."/>
            <person name="Graham J.E."/>
            <person name="Bryant D.A."/>
            <person name="Robb F."/>
            <person name="Colman A."/>
            <person name="Tallon L.J."/>
            <person name="Badger J.H."/>
            <person name="Madupu R."/>
            <person name="Ward N.L."/>
            <person name="Eisen J.A."/>
        </authorList>
    </citation>
    <scope>NUCLEOTIDE SEQUENCE [LARGE SCALE GENOMIC DNA]</scope>
    <source>
        <strain>ATCC 27502 / DSM 5159 / P-2</strain>
    </source>
</reference>
<protein>
    <recommendedName>
        <fullName evidence="1">CTP synthase</fullName>
        <ecNumber evidence="1">6.3.4.2</ecNumber>
    </recommendedName>
    <alternativeName>
        <fullName evidence="1">Cytidine 5'-triphosphate synthase</fullName>
    </alternativeName>
    <alternativeName>
        <fullName evidence="1">Cytidine triphosphate synthetase</fullName>
        <shortName evidence="1">CTP synthetase</shortName>
        <shortName evidence="1">CTPS</shortName>
    </alternativeName>
    <alternativeName>
        <fullName evidence="1">UTP--ammonia ligase</fullName>
    </alternativeName>
</protein>
<organism>
    <name type="scientific">Thermomicrobium roseum (strain ATCC 27502 / DSM 5159 / P-2)</name>
    <dbReference type="NCBI Taxonomy" id="309801"/>
    <lineage>
        <taxon>Bacteria</taxon>
        <taxon>Pseudomonadati</taxon>
        <taxon>Thermomicrobiota</taxon>
        <taxon>Thermomicrobia</taxon>
        <taxon>Thermomicrobiales</taxon>
        <taxon>Thermomicrobiaceae</taxon>
        <taxon>Thermomicrobium</taxon>
    </lineage>
</organism>
<sequence length="551" mass="61248">MPKYVFVTGGVVSSVGKGITTAAIGRLLKSRGLRVALMKLDPYLNVDPGTMSPYQHGEVFVTEDGAETDLDLGHYERFTDENLSRASNVTTGQVYSAVIAKERRGDYLGGTVQVIPHITNEIKARIRQVAELHRPDVIVVEVGGTVGDIEGQPFLEAIRQMRREEGRRNVLYIHVTFLPYIASTGEVKTKPTQHSVKELRAIGIQPDVIICRTDHPVGDDVRAKVALFGDVDEDAVILLPTAETIYEVPLMLERAGLGRYVMEHLGWDDRDPDLADWERMVERLKSPRRRLRIALVGKYVELHDAYLSVVEALRHAGLAHDVAVEIVWVNSTAERSEIEAALRHVNGIVVPGGFGPRGVEGKMLAARYARERGIPYLGLCYGLHMAVIEFARNVLGLCGANSTEIDPETPHPVIDLMPDQRGVEMGGTMRLGRYPCQLVPGTKAALAYGESLVYERHRHRWEVNNAYREAFEAAGFVVSGQSPDGRYVEIMELHDHPWFVGVQFHPEFKSRPNRPHPLFVAFIGVAKHVLREGEQRPLPLAEPVAMPAADD</sequence>
<dbReference type="EC" id="6.3.4.2" evidence="1"/>
<dbReference type="EMBL" id="CP001275">
    <property type="protein sequence ID" value="ACM05822.1"/>
    <property type="molecule type" value="Genomic_DNA"/>
</dbReference>
<dbReference type="RefSeq" id="WP_015922188.1">
    <property type="nucleotide sequence ID" value="NC_011959.1"/>
</dbReference>
<dbReference type="SMR" id="B9L1H7"/>
<dbReference type="STRING" id="309801.trd_1236"/>
<dbReference type="MEROPS" id="C26.964"/>
<dbReference type="KEGG" id="tro:trd_1236"/>
<dbReference type="eggNOG" id="COG0504">
    <property type="taxonomic scope" value="Bacteria"/>
</dbReference>
<dbReference type="HOGENOM" id="CLU_011675_5_0_0"/>
<dbReference type="OrthoDB" id="9801107at2"/>
<dbReference type="UniPathway" id="UPA00159">
    <property type="reaction ID" value="UER00277"/>
</dbReference>
<dbReference type="Proteomes" id="UP000000447">
    <property type="component" value="Chromosome"/>
</dbReference>
<dbReference type="GO" id="GO:0005829">
    <property type="term" value="C:cytosol"/>
    <property type="evidence" value="ECO:0007669"/>
    <property type="project" value="TreeGrafter"/>
</dbReference>
<dbReference type="GO" id="GO:0005524">
    <property type="term" value="F:ATP binding"/>
    <property type="evidence" value="ECO:0007669"/>
    <property type="project" value="UniProtKB-KW"/>
</dbReference>
<dbReference type="GO" id="GO:0003883">
    <property type="term" value="F:CTP synthase activity"/>
    <property type="evidence" value="ECO:0007669"/>
    <property type="project" value="UniProtKB-UniRule"/>
</dbReference>
<dbReference type="GO" id="GO:0004359">
    <property type="term" value="F:glutaminase activity"/>
    <property type="evidence" value="ECO:0007669"/>
    <property type="project" value="RHEA"/>
</dbReference>
<dbReference type="GO" id="GO:0042802">
    <property type="term" value="F:identical protein binding"/>
    <property type="evidence" value="ECO:0007669"/>
    <property type="project" value="TreeGrafter"/>
</dbReference>
<dbReference type="GO" id="GO:0046872">
    <property type="term" value="F:metal ion binding"/>
    <property type="evidence" value="ECO:0007669"/>
    <property type="project" value="UniProtKB-KW"/>
</dbReference>
<dbReference type="GO" id="GO:0044210">
    <property type="term" value="P:'de novo' CTP biosynthetic process"/>
    <property type="evidence" value="ECO:0007669"/>
    <property type="project" value="UniProtKB-UniRule"/>
</dbReference>
<dbReference type="GO" id="GO:0019856">
    <property type="term" value="P:pyrimidine nucleobase biosynthetic process"/>
    <property type="evidence" value="ECO:0007669"/>
    <property type="project" value="TreeGrafter"/>
</dbReference>
<dbReference type="CDD" id="cd03113">
    <property type="entry name" value="CTPS_N"/>
    <property type="match status" value="1"/>
</dbReference>
<dbReference type="CDD" id="cd01746">
    <property type="entry name" value="GATase1_CTP_Synthase"/>
    <property type="match status" value="1"/>
</dbReference>
<dbReference type="FunFam" id="3.40.50.300:FF:000009">
    <property type="entry name" value="CTP synthase"/>
    <property type="match status" value="1"/>
</dbReference>
<dbReference type="FunFam" id="3.40.50.880:FF:000002">
    <property type="entry name" value="CTP synthase"/>
    <property type="match status" value="1"/>
</dbReference>
<dbReference type="Gene3D" id="3.40.50.880">
    <property type="match status" value="1"/>
</dbReference>
<dbReference type="Gene3D" id="3.40.50.300">
    <property type="entry name" value="P-loop containing nucleotide triphosphate hydrolases"/>
    <property type="match status" value="1"/>
</dbReference>
<dbReference type="HAMAP" id="MF_01227">
    <property type="entry name" value="PyrG"/>
    <property type="match status" value="1"/>
</dbReference>
<dbReference type="InterPro" id="IPR029062">
    <property type="entry name" value="Class_I_gatase-like"/>
</dbReference>
<dbReference type="InterPro" id="IPR004468">
    <property type="entry name" value="CTP_synthase"/>
</dbReference>
<dbReference type="InterPro" id="IPR017456">
    <property type="entry name" value="CTP_synthase_N"/>
</dbReference>
<dbReference type="InterPro" id="IPR017926">
    <property type="entry name" value="GATASE"/>
</dbReference>
<dbReference type="InterPro" id="IPR033828">
    <property type="entry name" value="GATase1_CTP_Synthase"/>
</dbReference>
<dbReference type="InterPro" id="IPR027417">
    <property type="entry name" value="P-loop_NTPase"/>
</dbReference>
<dbReference type="NCBIfam" id="NF003792">
    <property type="entry name" value="PRK05380.1"/>
    <property type="match status" value="1"/>
</dbReference>
<dbReference type="NCBIfam" id="TIGR00337">
    <property type="entry name" value="PyrG"/>
    <property type="match status" value="1"/>
</dbReference>
<dbReference type="PANTHER" id="PTHR11550">
    <property type="entry name" value="CTP SYNTHASE"/>
    <property type="match status" value="1"/>
</dbReference>
<dbReference type="PANTHER" id="PTHR11550:SF0">
    <property type="entry name" value="CTP SYNTHASE-RELATED"/>
    <property type="match status" value="1"/>
</dbReference>
<dbReference type="Pfam" id="PF06418">
    <property type="entry name" value="CTP_synth_N"/>
    <property type="match status" value="1"/>
</dbReference>
<dbReference type="Pfam" id="PF00117">
    <property type="entry name" value="GATase"/>
    <property type="match status" value="1"/>
</dbReference>
<dbReference type="SUPFAM" id="SSF52317">
    <property type="entry name" value="Class I glutamine amidotransferase-like"/>
    <property type="match status" value="1"/>
</dbReference>
<dbReference type="SUPFAM" id="SSF52540">
    <property type="entry name" value="P-loop containing nucleoside triphosphate hydrolases"/>
    <property type="match status" value="1"/>
</dbReference>
<dbReference type="PROSITE" id="PS51273">
    <property type="entry name" value="GATASE_TYPE_1"/>
    <property type="match status" value="1"/>
</dbReference>
<proteinExistence type="inferred from homology"/>
<name>PYRG_THERP</name>
<evidence type="ECO:0000255" key="1">
    <source>
        <dbReference type="HAMAP-Rule" id="MF_01227"/>
    </source>
</evidence>
<feature type="chain" id="PRO_1000164963" description="CTP synthase">
    <location>
        <begin position="1"/>
        <end position="551"/>
    </location>
</feature>
<feature type="domain" description="Glutamine amidotransferase type-1" evidence="1">
    <location>
        <begin position="292"/>
        <end position="532"/>
    </location>
</feature>
<feature type="region of interest" description="Amidoligase domain" evidence="1">
    <location>
        <begin position="1"/>
        <end position="267"/>
    </location>
</feature>
<feature type="active site" description="Nucleophile; for glutamine hydrolysis" evidence="1">
    <location>
        <position position="380"/>
    </location>
</feature>
<feature type="active site" evidence="1">
    <location>
        <position position="505"/>
    </location>
</feature>
<feature type="active site" evidence="1">
    <location>
        <position position="507"/>
    </location>
</feature>
<feature type="binding site" evidence="1">
    <location>
        <position position="13"/>
    </location>
    <ligand>
        <name>CTP</name>
        <dbReference type="ChEBI" id="CHEBI:37563"/>
        <note>allosteric inhibitor</note>
    </ligand>
</feature>
<feature type="binding site" evidence="1">
    <location>
        <position position="13"/>
    </location>
    <ligand>
        <name>UTP</name>
        <dbReference type="ChEBI" id="CHEBI:46398"/>
    </ligand>
</feature>
<feature type="binding site" evidence="1">
    <location>
        <begin position="14"/>
        <end position="19"/>
    </location>
    <ligand>
        <name>ATP</name>
        <dbReference type="ChEBI" id="CHEBI:30616"/>
    </ligand>
</feature>
<feature type="binding site" evidence="1">
    <location>
        <position position="54"/>
    </location>
    <ligand>
        <name>L-glutamine</name>
        <dbReference type="ChEBI" id="CHEBI:58359"/>
    </ligand>
</feature>
<feature type="binding site" evidence="1">
    <location>
        <position position="71"/>
    </location>
    <ligand>
        <name>ATP</name>
        <dbReference type="ChEBI" id="CHEBI:30616"/>
    </ligand>
</feature>
<feature type="binding site" evidence="1">
    <location>
        <position position="71"/>
    </location>
    <ligand>
        <name>Mg(2+)</name>
        <dbReference type="ChEBI" id="CHEBI:18420"/>
    </ligand>
</feature>
<feature type="binding site" evidence="1">
    <location>
        <position position="141"/>
    </location>
    <ligand>
        <name>Mg(2+)</name>
        <dbReference type="ChEBI" id="CHEBI:18420"/>
    </ligand>
</feature>
<feature type="binding site" evidence="1">
    <location>
        <begin position="148"/>
        <end position="150"/>
    </location>
    <ligand>
        <name>CTP</name>
        <dbReference type="ChEBI" id="CHEBI:37563"/>
        <note>allosteric inhibitor</note>
    </ligand>
</feature>
<feature type="binding site" evidence="1">
    <location>
        <begin position="188"/>
        <end position="193"/>
    </location>
    <ligand>
        <name>CTP</name>
        <dbReference type="ChEBI" id="CHEBI:37563"/>
        <note>allosteric inhibitor</note>
    </ligand>
</feature>
<feature type="binding site" evidence="1">
    <location>
        <begin position="188"/>
        <end position="193"/>
    </location>
    <ligand>
        <name>UTP</name>
        <dbReference type="ChEBI" id="CHEBI:46398"/>
    </ligand>
</feature>
<feature type="binding site" evidence="1">
    <location>
        <position position="224"/>
    </location>
    <ligand>
        <name>CTP</name>
        <dbReference type="ChEBI" id="CHEBI:37563"/>
        <note>allosteric inhibitor</note>
    </ligand>
</feature>
<feature type="binding site" evidence="1">
    <location>
        <position position="224"/>
    </location>
    <ligand>
        <name>UTP</name>
        <dbReference type="ChEBI" id="CHEBI:46398"/>
    </ligand>
</feature>
<feature type="binding site" evidence="1">
    <location>
        <position position="353"/>
    </location>
    <ligand>
        <name>L-glutamine</name>
        <dbReference type="ChEBI" id="CHEBI:58359"/>
    </ligand>
</feature>
<feature type="binding site" evidence="1">
    <location>
        <begin position="381"/>
        <end position="384"/>
    </location>
    <ligand>
        <name>L-glutamine</name>
        <dbReference type="ChEBI" id="CHEBI:58359"/>
    </ligand>
</feature>
<feature type="binding site" evidence="1">
    <location>
        <position position="404"/>
    </location>
    <ligand>
        <name>L-glutamine</name>
        <dbReference type="ChEBI" id="CHEBI:58359"/>
    </ligand>
</feature>
<feature type="binding site" evidence="1">
    <location>
        <position position="460"/>
    </location>
    <ligand>
        <name>L-glutamine</name>
        <dbReference type="ChEBI" id="CHEBI:58359"/>
    </ligand>
</feature>
<keyword id="KW-0067">ATP-binding</keyword>
<keyword id="KW-0315">Glutamine amidotransferase</keyword>
<keyword id="KW-0436">Ligase</keyword>
<keyword id="KW-0460">Magnesium</keyword>
<keyword id="KW-0479">Metal-binding</keyword>
<keyword id="KW-0547">Nucleotide-binding</keyword>
<keyword id="KW-0665">Pyrimidine biosynthesis</keyword>
<keyword id="KW-1185">Reference proteome</keyword>
<comment type="function">
    <text evidence="1">Catalyzes the ATP-dependent amination of UTP to CTP with either L-glutamine or ammonia as the source of nitrogen. Regulates intracellular CTP levels through interactions with the four ribonucleotide triphosphates.</text>
</comment>
<comment type="catalytic activity">
    <reaction evidence="1">
        <text>UTP + L-glutamine + ATP + H2O = CTP + L-glutamate + ADP + phosphate + 2 H(+)</text>
        <dbReference type="Rhea" id="RHEA:26426"/>
        <dbReference type="ChEBI" id="CHEBI:15377"/>
        <dbReference type="ChEBI" id="CHEBI:15378"/>
        <dbReference type="ChEBI" id="CHEBI:29985"/>
        <dbReference type="ChEBI" id="CHEBI:30616"/>
        <dbReference type="ChEBI" id="CHEBI:37563"/>
        <dbReference type="ChEBI" id="CHEBI:43474"/>
        <dbReference type="ChEBI" id="CHEBI:46398"/>
        <dbReference type="ChEBI" id="CHEBI:58359"/>
        <dbReference type="ChEBI" id="CHEBI:456216"/>
        <dbReference type="EC" id="6.3.4.2"/>
    </reaction>
</comment>
<comment type="catalytic activity">
    <reaction evidence="1">
        <text>L-glutamine + H2O = L-glutamate + NH4(+)</text>
        <dbReference type="Rhea" id="RHEA:15889"/>
        <dbReference type="ChEBI" id="CHEBI:15377"/>
        <dbReference type="ChEBI" id="CHEBI:28938"/>
        <dbReference type="ChEBI" id="CHEBI:29985"/>
        <dbReference type="ChEBI" id="CHEBI:58359"/>
    </reaction>
</comment>
<comment type="catalytic activity">
    <reaction evidence="1">
        <text>UTP + NH4(+) + ATP = CTP + ADP + phosphate + 2 H(+)</text>
        <dbReference type="Rhea" id="RHEA:16597"/>
        <dbReference type="ChEBI" id="CHEBI:15378"/>
        <dbReference type="ChEBI" id="CHEBI:28938"/>
        <dbReference type="ChEBI" id="CHEBI:30616"/>
        <dbReference type="ChEBI" id="CHEBI:37563"/>
        <dbReference type="ChEBI" id="CHEBI:43474"/>
        <dbReference type="ChEBI" id="CHEBI:46398"/>
        <dbReference type="ChEBI" id="CHEBI:456216"/>
    </reaction>
</comment>
<comment type="activity regulation">
    <text evidence="1">Allosterically activated by GTP, when glutamine is the substrate; GTP has no effect on the reaction when ammonia is the substrate. The allosteric effector GTP functions by stabilizing the protein conformation that binds the tetrahedral intermediate(s) formed during glutamine hydrolysis. Inhibited by the product CTP, via allosteric rather than competitive inhibition.</text>
</comment>
<comment type="pathway">
    <text evidence="1">Pyrimidine metabolism; CTP biosynthesis via de novo pathway; CTP from UDP: step 2/2.</text>
</comment>
<comment type="subunit">
    <text evidence="1">Homotetramer.</text>
</comment>
<comment type="miscellaneous">
    <text evidence="1">CTPSs have evolved a hybrid strategy for distinguishing between UTP and CTP. The overlapping regions of the product feedback inhibitory and substrate sites recognize a common feature in both compounds, the triphosphate moiety. To differentiate isosteric substrate and product pyrimidine rings, an additional pocket far from the expected kinase/ligase catalytic site, specifically recognizes the cytosine and ribose portions of the product inhibitor.</text>
</comment>
<comment type="similarity">
    <text evidence="1">Belongs to the CTP synthase family.</text>
</comment>